<keyword id="KW-0067">ATP-binding</keyword>
<keyword id="KW-0963">Cytoplasm</keyword>
<keyword id="KW-0418">Kinase</keyword>
<keyword id="KW-0547">Nucleotide-binding</keyword>
<keyword id="KW-1185">Reference proteome</keyword>
<keyword id="KW-0808">Transferase</keyword>
<organism>
    <name type="scientific">Streptococcus gordonii (strain Challis / ATCC 35105 / BCRC 15272 / CH1 / DL1 / V288)</name>
    <dbReference type="NCBI Taxonomy" id="467705"/>
    <lineage>
        <taxon>Bacteria</taxon>
        <taxon>Bacillati</taxon>
        <taxon>Bacillota</taxon>
        <taxon>Bacilli</taxon>
        <taxon>Lactobacillales</taxon>
        <taxon>Streptococcaceae</taxon>
        <taxon>Streptococcus</taxon>
    </lineage>
</organism>
<accession>A8AX10</accession>
<protein>
    <recommendedName>
        <fullName evidence="1">Cytidylate kinase</fullName>
        <shortName evidence="1">CK</shortName>
        <ecNumber evidence="1">2.7.4.25</ecNumber>
    </recommendedName>
    <alternativeName>
        <fullName evidence="1">Cytidine monophosphate kinase</fullName>
        <shortName evidence="1">CMP kinase</shortName>
    </alternativeName>
</protein>
<sequence length="225" mass="24764">MKQIQIAIDGPASSGKSTVAKIIAKDLGYTYLDTGAMYRAATYLALQHQLTAADTEDIIRLLDDYSVSFGRSESGQQLVFVGDVDVTNPIRENDVTNNVSWVSAIPEVREKLVSLQQQIASQGGIVMDGRDIGTVVLPDAELKIFLVASVDERAERRYKENLERGISADLEVLKKEIADRDYKDSHRSVSPLRPADDSITFDTTGVSISDVVAFIEEKAKKILDK</sequence>
<proteinExistence type="inferred from homology"/>
<feature type="chain" id="PRO_1000078356" description="Cytidylate kinase">
    <location>
        <begin position="1"/>
        <end position="225"/>
    </location>
</feature>
<feature type="binding site" evidence="1">
    <location>
        <begin position="10"/>
        <end position="18"/>
    </location>
    <ligand>
        <name>ATP</name>
        <dbReference type="ChEBI" id="CHEBI:30616"/>
    </ligand>
</feature>
<reference key="1">
    <citation type="journal article" date="2007" name="J. Bacteriol.">
        <title>Genome-wide transcriptional changes in Streptococcus gordonii in response to competence signaling peptide.</title>
        <authorList>
            <person name="Vickerman M.M."/>
            <person name="Iobst S."/>
            <person name="Jesionowski A.M."/>
            <person name="Gill S.R."/>
        </authorList>
    </citation>
    <scope>NUCLEOTIDE SEQUENCE [LARGE SCALE GENOMIC DNA]</scope>
    <source>
        <strain>Challis / ATCC 35105 / BCRC 15272 / CH1 / DL1 / V288</strain>
    </source>
</reference>
<comment type="catalytic activity">
    <reaction evidence="1">
        <text>CMP + ATP = CDP + ADP</text>
        <dbReference type="Rhea" id="RHEA:11600"/>
        <dbReference type="ChEBI" id="CHEBI:30616"/>
        <dbReference type="ChEBI" id="CHEBI:58069"/>
        <dbReference type="ChEBI" id="CHEBI:60377"/>
        <dbReference type="ChEBI" id="CHEBI:456216"/>
        <dbReference type="EC" id="2.7.4.25"/>
    </reaction>
</comment>
<comment type="catalytic activity">
    <reaction evidence="1">
        <text>dCMP + ATP = dCDP + ADP</text>
        <dbReference type="Rhea" id="RHEA:25094"/>
        <dbReference type="ChEBI" id="CHEBI:30616"/>
        <dbReference type="ChEBI" id="CHEBI:57566"/>
        <dbReference type="ChEBI" id="CHEBI:58593"/>
        <dbReference type="ChEBI" id="CHEBI:456216"/>
        <dbReference type="EC" id="2.7.4.25"/>
    </reaction>
</comment>
<comment type="subcellular location">
    <subcellularLocation>
        <location evidence="1">Cytoplasm</location>
    </subcellularLocation>
</comment>
<comment type="similarity">
    <text evidence="1">Belongs to the cytidylate kinase family. Type 1 subfamily.</text>
</comment>
<gene>
    <name evidence="1" type="primary">cmk</name>
    <name type="ordered locus">SGO_1031</name>
</gene>
<dbReference type="EC" id="2.7.4.25" evidence="1"/>
<dbReference type="EMBL" id="CP000725">
    <property type="protein sequence ID" value="ABV09818.1"/>
    <property type="molecule type" value="Genomic_DNA"/>
</dbReference>
<dbReference type="RefSeq" id="WP_012000447.1">
    <property type="nucleotide sequence ID" value="NC_009785.1"/>
</dbReference>
<dbReference type="SMR" id="A8AX10"/>
<dbReference type="STRING" id="467705.SGO_1031"/>
<dbReference type="KEGG" id="sgo:SGO_1031"/>
<dbReference type="eggNOG" id="COG0283">
    <property type="taxonomic scope" value="Bacteria"/>
</dbReference>
<dbReference type="HOGENOM" id="CLU_079959_0_2_9"/>
<dbReference type="Proteomes" id="UP000001131">
    <property type="component" value="Chromosome"/>
</dbReference>
<dbReference type="GO" id="GO:0005829">
    <property type="term" value="C:cytosol"/>
    <property type="evidence" value="ECO:0007669"/>
    <property type="project" value="TreeGrafter"/>
</dbReference>
<dbReference type="GO" id="GO:0005524">
    <property type="term" value="F:ATP binding"/>
    <property type="evidence" value="ECO:0007669"/>
    <property type="project" value="UniProtKB-UniRule"/>
</dbReference>
<dbReference type="GO" id="GO:0036430">
    <property type="term" value="F:CMP kinase activity"/>
    <property type="evidence" value="ECO:0007669"/>
    <property type="project" value="RHEA"/>
</dbReference>
<dbReference type="GO" id="GO:0036431">
    <property type="term" value="F:dCMP kinase activity"/>
    <property type="evidence" value="ECO:0007669"/>
    <property type="project" value="RHEA"/>
</dbReference>
<dbReference type="GO" id="GO:0015949">
    <property type="term" value="P:nucleobase-containing small molecule interconversion"/>
    <property type="evidence" value="ECO:0007669"/>
    <property type="project" value="TreeGrafter"/>
</dbReference>
<dbReference type="GO" id="GO:0006220">
    <property type="term" value="P:pyrimidine nucleotide metabolic process"/>
    <property type="evidence" value="ECO:0007669"/>
    <property type="project" value="UniProtKB-UniRule"/>
</dbReference>
<dbReference type="CDD" id="cd02020">
    <property type="entry name" value="CMPK"/>
    <property type="match status" value="1"/>
</dbReference>
<dbReference type="FunFam" id="3.40.50.300:FF:000484">
    <property type="entry name" value="Cytidylate kinase"/>
    <property type="match status" value="1"/>
</dbReference>
<dbReference type="Gene3D" id="3.40.50.300">
    <property type="entry name" value="P-loop containing nucleotide triphosphate hydrolases"/>
    <property type="match status" value="1"/>
</dbReference>
<dbReference type="HAMAP" id="MF_00238">
    <property type="entry name" value="Cytidyl_kinase_type1"/>
    <property type="match status" value="1"/>
</dbReference>
<dbReference type="InterPro" id="IPR003136">
    <property type="entry name" value="Cytidylate_kin"/>
</dbReference>
<dbReference type="InterPro" id="IPR011994">
    <property type="entry name" value="Cytidylate_kinase_dom"/>
</dbReference>
<dbReference type="InterPro" id="IPR027417">
    <property type="entry name" value="P-loop_NTPase"/>
</dbReference>
<dbReference type="NCBIfam" id="TIGR00017">
    <property type="entry name" value="cmk"/>
    <property type="match status" value="1"/>
</dbReference>
<dbReference type="PANTHER" id="PTHR21299:SF2">
    <property type="entry name" value="CYTIDYLATE KINASE"/>
    <property type="match status" value="1"/>
</dbReference>
<dbReference type="PANTHER" id="PTHR21299">
    <property type="entry name" value="CYTIDYLATE KINASE/PANTOATE-BETA-ALANINE LIGASE"/>
    <property type="match status" value="1"/>
</dbReference>
<dbReference type="Pfam" id="PF02224">
    <property type="entry name" value="Cytidylate_kin"/>
    <property type="match status" value="1"/>
</dbReference>
<dbReference type="SUPFAM" id="SSF52540">
    <property type="entry name" value="P-loop containing nucleoside triphosphate hydrolases"/>
    <property type="match status" value="1"/>
</dbReference>
<name>KCY_STRGC</name>
<evidence type="ECO:0000255" key="1">
    <source>
        <dbReference type="HAMAP-Rule" id="MF_00238"/>
    </source>
</evidence>